<gene>
    <name evidence="1" type="primary">kdsB</name>
    <name type="ordered locus">Maqu_1738</name>
</gene>
<keyword id="KW-0963">Cytoplasm</keyword>
<keyword id="KW-0448">Lipopolysaccharide biosynthesis</keyword>
<keyword id="KW-0548">Nucleotidyltransferase</keyword>
<keyword id="KW-0808">Transferase</keyword>
<proteinExistence type="inferred from homology"/>
<dbReference type="EC" id="2.7.7.38" evidence="1"/>
<dbReference type="EMBL" id="CP000514">
    <property type="protein sequence ID" value="ABM18822.1"/>
    <property type="molecule type" value="Genomic_DNA"/>
</dbReference>
<dbReference type="RefSeq" id="WP_011785221.1">
    <property type="nucleotide sequence ID" value="NC_008740.1"/>
</dbReference>
<dbReference type="SMR" id="A1U1F3"/>
<dbReference type="STRING" id="351348.Maqu_1738"/>
<dbReference type="KEGG" id="maq:Maqu_1738"/>
<dbReference type="eggNOG" id="COG1212">
    <property type="taxonomic scope" value="Bacteria"/>
</dbReference>
<dbReference type="HOGENOM" id="CLU_065038_1_0_6"/>
<dbReference type="OrthoDB" id="9815559at2"/>
<dbReference type="UniPathway" id="UPA00030"/>
<dbReference type="UniPathway" id="UPA00358">
    <property type="reaction ID" value="UER00476"/>
</dbReference>
<dbReference type="Proteomes" id="UP000000998">
    <property type="component" value="Chromosome"/>
</dbReference>
<dbReference type="GO" id="GO:0005829">
    <property type="term" value="C:cytosol"/>
    <property type="evidence" value="ECO:0007669"/>
    <property type="project" value="TreeGrafter"/>
</dbReference>
<dbReference type="GO" id="GO:0008690">
    <property type="term" value="F:3-deoxy-manno-octulosonate cytidylyltransferase activity"/>
    <property type="evidence" value="ECO:0007669"/>
    <property type="project" value="UniProtKB-UniRule"/>
</dbReference>
<dbReference type="GO" id="GO:0033468">
    <property type="term" value="P:CMP-keto-3-deoxy-D-manno-octulosonic acid biosynthetic process"/>
    <property type="evidence" value="ECO:0007669"/>
    <property type="project" value="UniProtKB-UniRule"/>
</dbReference>
<dbReference type="GO" id="GO:0009103">
    <property type="term" value="P:lipopolysaccharide biosynthetic process"/>
    <property type="evidence" value="ECO:0007669"/>
    <property type="project" value="UniProtKB-UniRule"/>
</dbReference>
<dbReference type="CDD" id="cd02517">
    <property type="entry name" value="CMP-KDO-Synthetase"/>
    <property type="match status" value="1"/>
</dbReference>
<dbReference type="FunFam" id="3.90.550.10:FF:000011">
    <property type="entry name" value="3-deoxy-manno-octulosonate cytidylyltransferase"/>
    <property type="match status" value="1"/>
</dbReference>
<dbReference type="Gene3D" id="3.90.550.10">
    <property type="entry name" value="Spore Coat Polysaccharide Biosynthesis Protein SpsA, Chain A"/>
    <property type="match status" value="1"/>
</dbReference>
<dbReference type="HAMAP" id="MF_00057">
    <property type="entry name" value="KdsB"/>
    <property type="match status" value="1"/>
</dbReference>
<dbReference type="InterPro" id="IPR003329">
    <property type="entry name" value="Cytidylyl_trans"/>
</dbReference>
<dbReference type="InterPro" id="IPR004528">
    <property type="entry name" value="KdsB"/>
</dbReference>
<dbReference type="InterPro" id="IPR029044">
    <property type="entry name" value="Nucleotide-diphossugar_trans"/>
</dbReference>
<dbReference type="NCBIfam" id="TIGR00466">
    <property type="entry name" value="kdsB"/>
    <property type="match status" value="1"/>
</dbReference>
<dbReference type="NCBIfam" id="NF003950">
    <property type="entry name" value="PRK05450.1-3"/>
    <property type="match status" value="1"/>
</dbReference>
<dbReference type="NCBIfam" id="NF003952">
    <property type="entry name" value="PRK05450.1-5"/>
    <property type="match status" value="1"/>
</dbReference>
<dbReference type="NCBIfam" id="NF009905">
    <property type="entry name" value="PRK13368.1"/>
    <property type="match status" value="1"/>
</dbReference>
<dbReference type="PANTHER" id="PTHR42866">
    <property type="entry name" value="3-DEOXY-MANNO-OCTULOSONATE CYTIDYLYLTRANSFERASE"/>
    <property type="match status" value="1"/>
</dbReference>
<dbReference type="PANTHER" id="PTHR42866:SF2">
    <property type="entry name" value="3-DEOXY-MANNO-OCTULOSONATE CYTIDYLYLTRANSFERASE, MITOCHONDRIAL"/>
    <property type="match status" value="1"/>
</dbReference>
<dbReference type="Pfam" id="PF02348">
    <property type="entry name" value="CTP_transf_3"/>
    <property type="match status" value="1"/>
</dbReference>
<dbReference type="SUPFAM" id="SSF53448">
    <property type="entry name" value="Nucleotide-diphospho-sugar transferases"/>
    <property type="match status" value="1"/>
</dbReference>
<sequence length="261" mass="28818">MSFTVVIPARYASTRLPGKPLAMIAGKPMIQHVCERANESRASRVVVATDDARIEEACRGFGAEVIMTSPNHASGTDRLEEVARKLQLDPDHRVVNVQGDEPLIPPELINQVADNLEQYQEAAIATLCERIHDARQVFNPNVVKVVFDARGMAHYFSRAPIPWARDFWPAGAATQDVDLPDGIGYFRHIGIYGYRASVLSEFVTWLPAPTERVESLEQLRALYNGALIHVDVADRPPAPGVDTEEDLARLRALMEKGGARG</sequence>
<organism>
    <name type="scientific">Marinobacter nauticus (strain ATCC 700491 / DSM 11845 / VT8)</name>
    <name type="common">Marinobacter aquaeolei</name>
    <dbReference type="NCBI Taxonomy" id="351348"/>
    <lineage>
        <taxon>Bacteria</taxon>
        <taxon>Pseudomonadati</taxon>
        <taxon>Pseudomonadota</taxon>
        <taxon>Gammaproteobacteria</taxon>
        <taxon>Pseudomonadales</taxon>
        <taxon>Marinobacteraceae</taxon>
        <taxon>Marinobacter</taxon>
    </lineage>
</organism>
<comment type="function">
    <text evidence="1">Activates KDO (a required 8-carbon sugar) for incorporation into bacterial lipopolysaccharide in Gram-negative bacteria.</text>
</comment>
<comment type="catalytic activity">
    <reaction evidence="1">
        <text>3-deoxy-alpha-D-manno-oct-2-ulosonate + CTP = CMP-3-deoxy-beta-D-manno-octulosonate + diphosphate</text>
        <dbReference type="Rhea" id="RHEA:23448"/>
        <dbReference type="ChEBI" id="CHEBI:33019"/>
        <dbReference type="ChEBI" id="CHEBI:37563"/>
        <dbReference type="ChEBI" id="CHEBI:85986"/>
        <dbReference type="ChEBI" id="CHEBI:85987"/>
        <dbReference type="EC" id="2.7.7.38"/>
    </reaction>
</comment>
<comment type="pathway">
    <text evidence="1">Nucleotide-sugar biosynthesis; CMP-3-deoxy-D-manno-octulosonate biosynthesis; CMP-3-deoxy-D-manno-octulosonate from 3-deoxy-D-manno-octulosonate and CTP: step 1/1.</text>
</comment>
<comment type="pathway">
    <text evidence="1">Bacterial outer membrane biogenesis; lipopolysaccharide biosynthesis.</text>
</comment>
<comment type="subcellular location">
    <subcellularLocation>
        <location evidence="1">Cytoplasm</location>
    </subcellularLocation>
</comment>
<comment type="similarity">
    <text evidence="1">Belongs to the KdsB family.</text>
</comment>
<accession>A1U1F3</accession>
<feature type="chain" id="PRO_0000370093" description="3-deoxy-manno-octulosonate cytidylyltransferase">
    <location>
        <begin position="1"/>
        <end position="261"/>
    </location>
</feature>
<reference key="1">
    <citation type="journal article" date="2011" name="Appl. Environ. Microbiol.">
        <title>Genomic potential of Marinobacter aquaeolei, a biogeochemical 'opportunitroph'.</title>
        <authorList>
            <person name="Singer E."/>
            <person name="Webb E.A."/>
            <person name="Nelson W.C."/>
            <person name="Heidelberg J.F."/>
            <person name="Ivanova N."/>
            <person name="Pati A."/>
            <person name="Edwards K.J."/>
        </authorList>
    </citation>
    <scope>NUCLEOTIDE SEQUENCE [LARGE SCALE GENOMIC DNA]</scope>
    <source>
        <strain>ATCC 700491 / DSM 11845 / VT8</strain>
    </source>
</reference>
<protein>
    <recommendedName>
        <fullName evidence="1">3-deoxy-manno-octulosonate cytidylyltransferase</fullName>
        <ecNumber evidence="1">2.7.7.38</ecNumber>
    </recommendedName>
    <alternativeName>
        <fullName evidence="1">CMP-2-keto-3-deoxyoctulosonic acid synthase</fullName>
        <shortName evidence="1">CKS</shortName>
        <shortName evidence="1">CMP-KDO synthase</shortName>
    </alternativeName>
</protein>
<evidence type="ECO:0000255" key="1">
    <source>
        <dbReference type="HAMAP-Rule" id="MF_00057"/>
    </source>
</evidence>
<name>KDSB_MARN8</name>